<keyword id="KW-0067">ATP-binding</keyword>
<keyword id="KW-0963">Cytoplasm</keyword>
<keyword id="KW-0418">Kinase</keyword>
<keyword id="KW-0496">Mitochondrion</keyword>
<keyword id="KW-0547">Nucleotide-binding</keyword>
<keyword id="KW-0597">Phosphoprotein</keyword>
<keyword id="KW-1185">Reference proteome</keyword>
<keyword id="KW-0808">Transferase</keyword>
<name>KAD2_DROSI</name>
<comment type="function">
    <text evidence="2">Catalyzes the reversible transfer of the terminal phosphate group between ATP and AMP. Plays an important role in cellular energy homeostasis and in adenine nucleotide metabolism. Adenylate kinase activity is critical for regulation of the phosphate utilization and the AMP de novo biosynthesis pathways.</text>
</comment>
<comment type="catalytic activity">
    <reaction evidence="2">
        <text>AMP + ATP = 2 ADP</text>
        <dbReference type="Rhea" id="RHEA:12973"/>
        <dbReference type="ChEBI" id="CHEBI:30616"/>
        <dbReference type="ChEBI" id="CHEBI:456215"/>
        <dbReference type="ChEBI" id="CHEBI:456216"/>
        <dbReference type="EC" id="2.7.4.3"/>
    </reaction>
</comment>
<comment type="subunit">
    <text evidence="2">Monomer.</text>
</comment>
<comment type="subcellular location">
    <subcellularLocation>
        <location evidence="2">Cytoplasm</location>
        <location evidence="2">Cytosol</location>
    </subcellularLocation>
    <subcellularLocation>
        <location evidence="2">Mitochondrion intermembrane space</location>
    </subcellularLocation>
    <text evidence="2">Predominantly mitochondrial.</text>
</comment>
<comment type="domain">
    <text evidence="2">Consists of three domains, a large central CORE domain and two small peripheral domains, NMPbind and LID, which undergo movements during catalysis. The LID domain closes over the site of phosphoryl transfer upon ATP binding. Assembling and dissambling the active center during each catalytic cycle provides an effective means to prevent ATP hydrolysis.</text>
</comment>
<comment type="similarity">
    <text evidence="2">Belongs to the adenylate kinase family. AK2 subfamily.</text>
</comment>
<evidence type="ECO:0000250" key="1"/>
<evidence type="ECO:0000255" key="2">
    <source>
        <dbReference type="HAMAP-Rule" id="MF_03168"/>
    </source>
</evidence>
<feature type="chain" id="PRO_0000365710" description="Adenylate kinase">
    <location>
        <begin position="1"/>
        <end position="240"/>
    </location>
</feature>
<feature type="region of interest" description="NMP" evidence="2">
    <location>
        <begin position="48"/>
        <end position="77"/>
    </location>
</feature>
<feature type="region of interest" description="LID" evidence="2">
    <location>
        <begin position="144"/>
        <end position="181"/>
    </location>
</feature>
<feature type="binding site" evidence="2">
    <location>
        <begin position="28"/>
        <end position="33"/>
    </location>
    <ligand>
        <name>ATP</name>
        <dbReference type="ChEBI" id="CHEBI:30616"/>
    </ligand>
</feature>
<feature type="binding site" evidence="2">
    <location>
        <position position="49"/>
    </location>
    <ligand>
        <name>AMP</name>
        <dbReference type="ChEBI" id="CHEBI:456215"/>
    </ligand>
</feature>
<feature type="binding site" evidence="2">
    <location>
        <position position="54"/>
    </location>
    <ligand>
        <name>AMP</name>
        <dbReference type="ChEBI" id="CHEBI:456215"/>
    </ligand>
</feature>
<feature type="binding site" evidence="2">
    <location>
        <begin position="75"/>
        <end position="77"/>
    </location>
    <ligand>
        <name>AMP</name>
        <dbReference type="ChEBI" id="CHEBI:456215"/>
    </ligand>
</feature>
<feature type="binding site" evidence="2">
    <location>
        <begin position="103"/>
        <end position="106"/>
    </location>
    <ligand>
        <name>AMP</name>
        <dbReference type="ChEBI" id="CHEBI:456215"/>
    </ligand>
</feature>
<feature type="binding site" evidence="2">
    <location>
        <position position="110"/>
    </location>
    <ligand>
        <name>AMP</name>
        <dbReference type="ChEBI" id="CHEBI:456215"/>
    </ligand>
</feature>
<feature type="binding site" evidence="2">
    <location>
        <position position="145"/>
    </location>
    <ligand>
        <name>ATP</name>
        <dbReference type="ChEBI" id="CHEBI:30616"/>
    </ligand>
</feature>
<feature type="binding site" evidence="2">
    <location>
        <begin position="154"/>
        <end position="155"/>
    </location>
    <ligand>
        <name>ATP</name>
        <dbReference type="ChEBI" id="CHEBI:30616"/>
    </ligand>
</feature>
<feature type="binding site" evidence="2">
    <location>
        <position position="178"/>
    </location>
    <ligand>
        <name>AMP</name>
        <dbReference type="ChEBI" id="CHEBI:456215"/>
    </ligand>
</feature>
<feature type="binding site" evidence="2">
    <location>
        <position position="189"/>
    </location>
    <ligand>
        <name>AMP</name>
        <dbReference type="ChEBI" id="CHEBI:456215"/>
    </ligand>
</feature>
<feature type="binding site" evidence="2">
    <location>
        <position position="217"/>
    </location>
    <ligand>
        <name>ATP</name>
        <dbReference type="ChEBI" id="CHEBI:30616"/>
    </ligand>
</feature>
<feature type="modified residue" description="Phosphoserine" evidence="1">
    <location>
        <position position="48"/>
    </location>
</feature>
<sequence>MAPNAAVPVERYEPENIGINAILLGPPGSGKGTQAPLLKEKFCVCHLSTGDMLRAEISSGSKLGAELKKVMDAGKLVSDELVVDMIDSNLDKPECKNGFLLDGFPRTVVQAEKLDTLLDKRKTNLDAVIEFAIDDSLLVRRITGRLIHQASGRSYHEEFAPPKKPMTDDVTGEPLIRRSDDNAEALKKRLEAYHKQTKPLVDYYGLRGLHFKVDAAKKSSDVFSTIDSIFQRKRPAQVQL</sequence>
<dbReference type="EC" id="2.7.4.3" evidence="2"/>
<dbReference type="EMBL" id="CM000362">
    <property type="protein sequence ID" value="EDX08496.1"/>
    <property type="molecule type" value="Genomic_DNA"/>
</dbReference>
<dbReference type="SMR" id="B4QBH8"/>
<dbReference type="STRING" id="7240.B4QBH8"/>
<dbReference type="EnsemblMetazoa" id="FBtr0211735">
    <property type="protein sequence ID" value="FBpp0210227"/>
    <property type="gene ID" value="FBgn0183564"/>
</dbReference>
<dbReference type="EnsemblMetazoa" id="XM_002082875.4">
    <property type="protein sequence ID" value="XP_002082911.1"/>
    <property type="gene ID" value="LOC6736002"/>
</dbReference>
<dbReference type="GeneID" id="6736002"/>
<dbReference type="CTD" id="204"/>
<dbReference type="HOGENOM" id="CLU_032354_1_0_1"/>
<dbReference type="OMA" id="HYKVDAA"/>
<dbReference type="OrthoDB" id="439792at2759"/>
<dbReference type="PhylomeDB" id="B4QBH8"/>
<dbReference type="Proteomes" id="UP000000304">
    <property type="component" value="Chromosome 2R"/>
</dbReference>
<dbReference type="Bgee" id="FBgn0183564">
    <property type="expression patterns" value="Expressed in embryo and 3 other cell types or tissues"/>
</dbReference>
<dbReference type="GO" id="GO:0005829">
    <property type="term" value="C:cytosol"/>
    <property type="evidence" value="ECO:0007669"/>
    <property type="project" value="UniProtKB-SubCell"/>
</dbReference>
<dbReference type="GO" id="GO:0005758">
    <property type="term" value="C:mitochondrial intermembrane space"/>
    <property type="evidence" value="ECO:0007669"/>
    <property type="project" value="UniProtKB-SubCell"/>
</dbReference>
<dbReference type="GO" id="GO:0004017">
    <property type="term" value="F:adenylate kinase activity"/>
    <property type="evidence" value="ECO:0007669"/>
    <property type="project" value="UniProtKB-UniRule"/>
</dbReference>
<dbReference type="GO" id="GO:0005524">
    <property type="term" value="F:ATP binding"/>
    <property type="evidence" value="ECO:0007669"/>
    <property type="project" value="UniProtKB-KW"/>
</dbReference>
<dbReference type="GO" id="GO:0006172">
    <property type="term" value="P:ADP biosynthetic process"/>
    <property type="evidence" value="ECO:0007669"/>
    <property type="project" value="UniProtKB-UniRule"/>
</dbReference>
<dbReference type="GO" id="GO:0046033">
    <property type="term" value="P:AMP metabolic process"/>
    <property type="evidence" value="ECO:0007669"/>
    <property type="project" value="UniProtKB-UniRule"/>
</dbReference>
<dbReference type="GO" id="GO:0046034">
    <property type="term" value="P:ATP metabolic process"/>
    <property type="evidence" value="ECO:0007669"/>
    <property type="project" value="UniProtKB-UniRule"/>
</dbReference>
<dbReference type="CDD" id="cd01428">
    <property type="entry name" value="ADK"/>
    <property type="match status" value="1"/>
</dbReference>
<dbReference type="FunFam" id="3.40.50.300:FF:000106">
    <property type="entry name" value="Adenylate kinase mitochondrial"/>
    <property type="match status" value="1"/>
</dbReference>
<dbReference type="Gene3D" id="3.40.50.300">
    <property type="entry name" value="P-loop containing nucleotide triphosphate hydrolases"/>
    <property type="match status" value="1"/>
</dbReference>
<dbReference type="HAMAP" id="MF_00235">
    <property type="entry name" value="Adenylate_kinase_Adk"/>
    <property type="match status" value="1"/>
</dbReference>
<dbReference type="HAMAP" id="MF_03168">
    <property type="entry name" value="Adenylate_kinase_AK2"/>
    <property type="match status" value="1"/>
</dbReference>
<dbReference type="InterPro" id="IPR006259">
    <property type="entry name" value="Adenyl_kin_sub"/>
</dbReference>
<dbReference type="InterPro" id="IPR000850">
    <property type="entry name" value="Adenylat/UMP-CMP_kin"/>
</dbReference>
<dbReference type="InterPro" id="IPR033690">
    <property type="entry name" value="Adenylat_kinase_CS"/>
</dbReference>
<dbReference type="InterPro" id="IPR007862">
    <property type="entry name" value="Adenylate_kinase_lid-dom"/>
</dbReference>
<dbReference type="InterPro" id="IPR028587">
    <property type="entry name" value="AK2"/>
</dbReference>
<dbReference type="InterPro" id="IPR027417">
    <property type="entry name" value="P-loop_NTPase"/>
</dbReference>
<dbReference type="NCBIfam" id="TIGR01351">
    <property type="entry name" value="adk"/>
    <property type="match status" value="1"/>
</dbReference>
<dbReference type="NCBIfam" id="NF001380">
    <property type="entry name" value="PRK00279.1-2"/>
    <property type="match status" value="1"/>
</dbReference>
<dbReference type="NCBIfam" id="NF001381">
    <property type="entry name" value="PRK00279.1-3"/>
    <property type="match status" value="1"/>
</dbReference>
<dbReference type="NCBIfam" id="NF011100">
    <property type="entry name" value="PRK14527.1"/>
    <property type="match status" value="1"/>
</dbReference>
<dbReference type="PANTHER" id="PTHR23359">
    <property type="entry name" value="NUCLEOTIDE KINASE"/>
    <property type="match status" value="1"/>
</dbReference>
<dbReference type="Pfam" id="PF00406">
    <property type="entry name" value="ADK"/>
    <property type="match status" value="1"/>
</dbReference>
<dbReference type="Pfam" id="PF05191">
    <property type="entry name" value="ADK_lid"/>
    <property type="match status" value="1"/>
</dbReference>
<dbReference type="PRINTS" id="PR00094">
    <property type="entry name" value="ADENYLTKNASE"/>
</dbReference>
<dbReference type="SUPFAM" id="SSF52540">
    <property type="entry name" value="P-loop containing nucleoside triphosphate hydrolases"/>
    <property type="match status" value="1"/>
</dbReference>
<dbReference type="PROSITE" id="PS00113">
    <property type="entry name" value="ADENYLATE_KINASE"/>
    <property type="match status" value="1"/>
</dbReference>
<proteinExistence type="inferred from homology"/>
<reference key="1">
    <citation type="journal article" date="2007" name="Nature">
        <title>Evolution of genes and genomes on the Drosophila phylogeny.</title>
        <authorList>
            <consortium name="Drosophila 12 genomes consortium"/>
        </authorList>
    </citation>
    <scope>NUCLEOTIDE SEQUENCE [LARGE SCALE GENOMIC DNA]</scope>
</reference>
<organism>
    <name type="scientific">Drosophila simulans</name>
    <name type="common">Fruit fly</name>
    <dbReference type="NCBI Taxonomy" id="7240"/>
    <lineage>
        <taxon>Eukaryota</taxon>
        <taxon>Metazoa</taxon>
        <taxon>Ecdysozoa</taxon>
        <taxon>Arthropoda</taxon>
        <taxon>Hexapoda</taxon>
        <taxon>Insecta</taxon>
        <taxon>Pterygota</taxon>
        <taxon>Neoptera</taxon>
        <taxon>Endopterygota</taxon>
        <taxon>Diptera</taxon>
        <taxon>Brachycera</taxon>
        <taxon>Muscomorpha</taxon>
        <taxon>Ephydroidea</taxon>
        <taxon>Drosophilidae</taxon>
        <taxon>Drosophila</taxon>
        <taxon>Sophophora</taxon>
    </lineage>
</organism>
<accession>B4QBH8</accession>
<protein>
    <recommendedName>
        <fullName evidence="2">Adenylate kinase</fullName>
        <ecNumber evidence="2">2.7.4.3</ecNumber>
    </recommendedName>
    <alternativeName>
        <fullName evidence="2">ATP-AMP transphosphorylase</fullName>
    </alternativeName>
    <alternativeName>
        <fullName evidence="2">ATP:AMP phosphotransferase</fullName>
    </alternativeName>
    <alternativeName>
        <fullName evidence="2">Adenylate kinase cytosolic and mitochondrial</fullName>
    </alternativeName>
    <alternativeName>
        <fullName evidence="2">Adenylate monophosphate kinase</fullName>
    </alternativeName>
</protein>
<gene>
    <name evidence="2" type="primary">Adk2</name>
    <name type="ORF">GD11825</name>
</gene>